<dbReference type="EMBL" id="CP001277">
    <property type="protein sequence ID" value="ACQ67113.1"/>
    <property type="molecule type" value="Genomic_DNA"/>
</dbReference>
<dbReference type="RefSeq" id="WP_012738073.1">
    <property type="nucleotide sequence ID" value="NC_012751.1"/>
</dbReference>
<dbReference type="SMR" id="C4K3H0"/>
<dbReference type="STRING" id="572265.HDEF_0354"/>
<dbReference type="GeneID" id="66260266"/>
<dbReference type="KEGG" id="hde:HDEF_0354"/>
<dbReference type="eggNOG" id="COG0316">
    <property type="taxonomic scope" value="Bacteria"/>
</dbReference>
<dbReference type="HOGENOM" id="CLU_069054_5_3_6"/>
<dbReference type="Proteomes" id="UP000002334">
    <property type="component" value="Chromosome"/>
</dbReference>
<dbReference type="GO" id="GO:0005829">
    <property type="term" value="C:cytosol"/>
    <property type="evidence" value="ECO:0007669"/>
    <property type="project" value="TreeGrafter"/>
</dbReference>
<dbReference type="GO" id="GO:0051537">
    <property type="term" value="F:2 iron, 2 sulfur cluster binding"/>
    <property type="evidence" value="ECO:0007669"/>
    <property type="project" value="TreeGrafter"/>
</dbReference>
<dbReference type="GO" id="GO:0051539">
    <property type="term" value="F:4 iron, 4 sulfur cluster binding"/>
    <property type="evidence" value="ECO:0007669"/>
    <property type="project" value="TreeGrafter"/>
</dbReference>
<dbReference type="GO" id="GO:0005506">
    <property type="term" value="F:iron ion binding"/>
    <property type="evidence" value="ECO:0007669"/>
    <property type="project" value="UniProtKB-UniRule"/>
</dbReference>
<dbReference type="GO" id="GO:0016226">
    <property type="term" value="P:iron-sulfur cluster assembly"/>
    <property type="evidence" value="ECO:0007669"/>
    <property type="project" value="UniProtKB-UniRule"/>
</dbReference>
<dbReference type="FunFam" id="2.60.300.12:FF:000002">
    <property type="entry name" value="Iron-sulfur cluster insertion protein ErpA"/>
    <property type="match status" value="1"/>
</dbReference>
<dbReference type="Gene3D" id="2.60.300.12">
    <property type="entry name" value="HesB-like domain"/>
    <property type="match status" value="1"/>
</dbReference>
<dbReference type="HAMAP" id="MF_01380">
    <property type="entry name" value="Fe_S_insert_ErpA"/>
    <property type="match status" value="1"/>
</dbReference>
<dbReference type="InterPro" id="IPR000361">
    <property type="entry name" value="FeS_biogenesis"/>
</dbReference>
<dbReference type="InterPro" id="IPR016092">
    <property type="entry name" value="FeS_cluster_insertion"/>
</dbReference>
<dbReference type="InterPro" id="IPR023063">
    <property type="entry name" value="FeS_cluster_insertion_RrpA"/>
</dbReference>
<dbReference type="InterPro" id="IPR035903">
    <property type="entry name" value="HesB-like_dom_sf"/>
</dbReference>
<dbReference type="NCBIfam" id="TIGR00049">
    <property type="entry name" value="iron-sulfur cluster assembly accessory protein"/>
    <property type="match status" value="1"/>
</dbReference>
<dbReference type="NCBIfam" id="NF010147">
    <property type="entry name" value="PRK13623.1"/>
    <property type="match status" value="1"/>
</dbReference>
<dbReference type="PANTHER" id="PTHR43011">
    <property type="entry name" value="IRON-SULFUR CLUSTER ASSEMBLY 2 HOMOLOG, MITOCHONDRIAL"/>
    <property type="match status" value="1"/>
</dbReference>
<dbReference type="PANTHER" id="PTHR43011:SF1">
    <property type="entry name" value="IRON-SULFUR CLUSTER ASSEMBLY 2 HOMOLOG, MITOCHONDRIAL"/>
    <property type="match status" value="1"/>
</dbReference>
<dbReference type="Pfam" id="PF01521">
    <property type="entry name" value="Fe-S_biosyn"/>
    <property type="match status" value="1"/>
</dbReference>
<dbReference type="SUPFAM" id="SSF89360">
    <property type="entry name" value="HesB-like domain"/>
    <property type="match status" value="1"/>
</dbReference>
<comment type="function">
    <text evidence="1">Required for insertion of 4Fe-4S clusters for at least IspG.</text>
</comment>
<comment type="cofactor">
    <cofactor evidence="1">
        <name>iron-sulfur cluster</name>
        <dbReference type="ChEBI" id="CHEBI:30408"/>
    </cofactor>
    <text evidence="1">Binds 1 iron-sulfur cluster per subunit.</text>
</comment>
<comment type="subunit">
    <text evidence="1">Homodimer.</text>
</comment>
<comment type="similarity">
    <text evidence="1">Belongs to the HesB/IscA family.</text>
</comment>
<keyword id="KW-0408">Iron</keyword>
<keyword id="KW-0411">Iron-sulfur</keyword>
<keyword id="KW-0479">Metal-binding</keyword>
<gene>
    <name evidence="1" type="primary">erpA</name>
    <name type="ordered locus">HDEF_0354</name>
</gene>
<organism>
    <name type="scientific">Hamiltonella defensa subsp. Acyrthosiphon pisum (strain 5AT)</name>
    <dbReference type="NCBI Taxonomy" id="572265"/>
    <lineage>
        <taxon>Bacteria</taxon>
        <taxon>Pseudomonadati</taxon>
        <taxon>Pseudomonadota</taxon>
        <taxon>Gammaproteobacteria</taxon>
        <taxon>Enterobacterales</taxon>
        <taxon>Enterobacteriaceae</taxon>
        <taxon>aphid secondary symbionts</taxon>
        <taxon>Candidatus Hamiltonella</taxon>
    </lineage>
</organism>
<name>ERPA_HAMD5</name>
<protein>
    <recommendedName>
        <fullName evidence="1">Iron-sulfur cluster insertion protein ErpA</fullName>
    </recommendedName>
</protein>
<proteinExistence type="inferred from homology"/>
<reference key="1">
    <citation type="journal article" date="2009" name="Proc. Natl. Acad. Sci. U.S.A.">
        <title>Hamiltonella defensa, genome evolution of protective bacterial endosymbiont from pathogenic ancestors.</title>
        <authorList>
            <person name="Degnan P.H."/>
            <person name="Yu Y."/>
            <person name="Sisneros N."/>
            <person name="Wing R.A."/>
            <person name="Moran N.A."/>
        </authorList>
    </citation>
    <scope>NUCLEOTIDE SEQUENCE [LARGE SCALE GENOMIC DNA]</scope>
    <source>
        <strain>5AT</strain>
    </source>
</reference>
<evidence type="ECO:0000255" key="1">
    <source>
        <dbReference type="HAMAP-Rule" id="MF_01380"/>
    </source>
</evidence>
<feature type="chain" id="PRO_1000215095" description="Iron-sulfur cluster insertion protein ErpA">
    <location>
        <begin position="1"/>
        <end position="114"/>
    </location>
</feature>
<feature type="binding site" evidence="1">
    <location>
        <position position="42"/>
    </location>
    <ligand>
        <name>iron-sulfur cluster</name>
        <dbReference type="ChEBI" id="CHEBI:30408"/>
    </ligand>
</feature>
<feature type="binding site" evidence="1">
    <location>
        <position position="106"/>
    </location>
    <ligand>
        <name>iron-sulfur cluster</name>
        <dbReference type="ChEBI" id="CHEBI:30408"/>
    </ligand>
</feature>
<feature type="binding site" evidence="1">
    <location>
        <position position="108"/>
    </location>
    <ligand>
        <name>iron-sulfur cluster</name>
        <dbReference type="ChEBI" id="CHEBI:30408"/>
    </ligand>
</feature>
<sequence length="114" mass="12553">MNHPTRLPLDFTEAAARKFKELIANEHNSNKKLRVYVEGGGCNGFKYMFTLDDKVNEGDLAINKQGVSLVVDPLSLGYLIGGIVDYVESIEYSRFIVKNLNAKTTCGCGSSFSV</sequence>
<accession>C4K3H0</accession>